<gene>
    <name evidence="1" type="primary">rpmI</name>
    <name type="ordered locus">RPC_0449</name>
</gene>
<dbReference type="EMBL" id="CP000301">
    <property type="protein sequence ID" value="ABD86024.1"/>
    <property type="molecule type" value="Genomic_DNA"/>
</dbReference>
<dbReference type="SMR" id="Q21C62"/>
<dbReference type="STRING" id="316056.RPC_0449"/>
<dbReference type="KEGG" id="rpc:RPC_0449"/>
<dbReference type="eggNOG" id="COG0291">
    <property type="taxonomic scope" value="Bacteria"/>
</dbReference>
<dbReference type="HOGENOM" id="CLU_169643_2_1_5"/>
<dbReference type="OrthoDB" id="9804851at2"/>
<dbReference type="GO" id="GO:0022625">
    <property type="term" value="C:cytosolic large ribosomal subunit"/>
    <property type="evidence" value="ECO:0007669"/>
    <property type="project" value="TreeGrafter"/>
</dbReference>
<dbReference type="GO" id="GO:0003735">
    <property type="term" value="F:structural constituent of ribosome"/>
    <property type="evidence" value="ECO:0007669"/>
    <property type="project" value="InterPro"/>
</dbReference>
<dbReference type="GO" id="GO:0006412">
    <property type="term" value="P:translation"/>
    <property type="evidence" value="ECO:0007669"/>
    <property type="project" value="UniProtKB-UniRule"/>
</dbReference>
<dbReference type="FunFam" id="4.10.410.60:FF:000001">
    <property type="entry name" value="50S ribosomal protein L35"/>
    <property type="match status" value="1"/>
</dbReference>
<dbReference type="Gene3D" id="4.10.410.60">
    <property type="match status" value="1"/>
</dbReference>
<dbReference type="HAMAP" id="MF_00514">
    <property type="entry name" value="Ribosomal_bL35"/>
    <property type="match status" value="1"/>
</dbReference>
<dbReference type="InterPro" id="IPR001706">
    <property type="entry name" value="Ribosomal_bL35"/>
</dbReference>
<dbReference type="InterPro" id="IPR021137">
    <property type="entry name" value="Ribosomal_bL35-like"/>
</dbReference>
<dbReference type="InterPro" id="IPR018265">
    <property type="entry name" value="Ribosomal_bL35_CS"/>
</dbReference>
<dbReference type="InterPro" id="IPR037229">
    <property type="entry name" value="Ribosomal_bL35_sf"/>
</dbReference>
<dbReference type="NCBIfam" id="TIGR00001">
    <property type="entry name" value="rpmI_bact"/>
    <property type="match status" value="1"/>
</dbReference>
<dbReference type="PANTHER" id="PTHR33343">
    <property type="entry name" value="54S RIBOSOMAL PROTEIN BL35M"/>
    <property type="match status" value="1"/>
</dbReference>
<dbReference type="PANTHER" id="PTHR33343:SF1">
    <property type="entry name" value="LARGE RIBOSOMAL SUBUNIT PROTEIN BL35M"/>
    <property type="match status" value="1"/>
</dbReference>
<dbReference type="Pfam" id="PF01632">
    <property type="entry name" value="Ribosomal_L35p"/>
    <property type="match status" value="1"/>
</dbReference>
<dbReference type="PRINTS" id="PR00064">
    <property type="entry name" value="RIBOSOMALL35"/>
</dbReference>
<dbReference type="SUPFAM" id="SSF143034">
    <property type="entry name" value="L35p-like"/>
    <property type="match status" value="1"/>
</dbReference>
<dbReference type="PROSITE" id="PS00936">
    <property type="entry name" value="RIBOSOMAL_L35"/>
    <property type="match status" value="1"/>
</dbReference>
<protein>
    <recommendedName>
        <fullName evidence="1">Large ribosomal subunit protein bL35</fullName>
    </recommendedName>
    <alternativeName>
        <fullName evidence="2">50S ribosomal protein L35</fullName>
    </alternativeName>
</protein>
<feature type="chain" id="PRO_0000258739" description="Large ribosomal subunit protein bL35">
    <location>
        <begin position="1"/>
        <end position="66"/>
    </location>
</feature>
<sequence>MPKLKTKSGAKKRFKVTGTGKVVSAHAGKRHGMIKRTKKQIRQLRGTRILFKTDGENIKKYFLPNA</sequence>
<organism>
    <name type="scientific">Rhodopseudomonas palustris (strain BisB18)</name>
    <dbReference type="NCBI Taxonomy" id="316056"/>
    <lineage>
        <taxon>Bacteria</taxon>
        <taxon>Pseudomonadati</taxon>
        <taxon>Pseudomonadota</taxon>
        <taxon>Alphaproteobacteria</taxon>
        <taxon>Hyphomicrobiales</taxon>
        <taxon>Nitrobacteraceae</taxon>
        <taxon>Rhodopseudomonas</taxon>
    </lineage>
</organism>
<proteinExistence type="inferred from homology"/>
<evidence type="ECO:0000255" key="1">
    <source>
        <dbReference type="HAMAP-Rule" id="MF_00514"/>
    </source>
</evidence>
<evidence type="ECO:0000305" key="2"/>
<accession>Q21C62</accession>
<reference key="1">
    <citation type="submission" date="2006-03" db="EMBL/GenBank/DDBJ databases">
        <title>Complete sequence of Rhodopseudomonas palustris BisB18.</title>
        <authorList>
            <consortium name="US DOE Joint Genome Institute"/>
            <person name="Copeland A."/>
            <person name="Lucas S."/>
            <person name="Lapidus A."/>
            <person name="Barry K."/>
            <person name="Detter J.C."/>
            <person name="Glavina del Rio T."/>
            <person name="Hammon N."/>
            <person name="Israni S."/>
            <person name="Dalin E."/>
            <person name="Tice H."/>
            <person name="Pitluck S."/>
            <person name="Chain P."/>
            <person name="Malfatti S."/>
            <person name="Shin M."/>
            <person name="Vergez L."/>
            <person name="Schmutz J."/>
            <person name="Larimer F."/>
            <person name="Land M."/>
            <person name="Hauser L."/>
            <person name="Pelletier D.A."/>
            <person name="Kyrpides N."/>
            <person name="Anderson I."/>
            <person name="Oda Y."/>
            <person name="Harwood C.S."/>
            <person name="Richardson P."/>
        </authorList>
    </citation>
    <scope>NUCLEOTIDE SEQUENCE [LARGE SCALE GENOMIC DNA]</scope>
    <source>
        <strain>BisB18</strain>
    </source>
</reference>
<keyword id="KW-0687">Ribonucleoprotein</keyword>
<keyword id="KW-0689">Ribosomal protein</keyword>
<name>RL35_RHOPB</name>
<comment type="similarity">
    <text evidence="1">Belongs to the bacterial ribosomal protein bL35 family.</text>
</comment>